<proteinExistence type="inferred from homology"/>
<organism>
    <name type="scientific">Salmonella gallinarum (strain 287/91 / NCTC 13346)</name>
    <dbReference type="NCBI Taxonomy" id="550538"/>
    <lineage>
        <taxon>Bacteria</taxon>
        <taxon>Pseudomonadati</taxon>
        <taxon>Pseudomonadota</taxon>
        <taxon>Gammaproteobacteria</taxon>
        <taxon>Enterobacterales</taxon>
        <taxon>Enterobacteriaceae</taxon>
        <taxon>Salmonella</taxon>
    </lineage>
</organism>
<name>MINC_SALG2</name>
<sequence length="235" mass="25246">MSNTPIELKGSSFTLSVVHLHEAEPEVIRQALEDKIAQAPAFLKHAPVVINVSGLESPVNWPELHKIVTSTGLRIIGVSGCKDASLKVEIDRMGLPLLTEGKEKAVRPAPVEPATPSEPPQNANPITKTRLIDVPVRSGQRIYAPQCDLIVTSHVSAGAELIADGNIHVYGMMRGRALAGASGDREAQIFCTHLTAELVSIAGVYWLSDKIPAEFYGKAARLRLADNALTVQPLN</sequence>
<accession>B5R8Y7</accession>
<keyword id="KW-0131">Cell cycle</keyword>
<keyword id="KW-0132">Cell division</keyword>
<keyword id="KW-0717">Septation</keyword>
<reference key="1">
    <citation type="journal article" date="2008" name="Genome Res.">
        <title>Comparative genome analysis of Salmonella enteritidis PT4 and Salmonella gallinarum 287/91 provides insights into evolutionary and host adaptation pathways.</title>
        <authorList>
            <person name="Thomson N.R."/>
            <person name="Clayton D.J."/>
            <person name="Windhorst D."/>
            <person name="Vernikos G."/>
            <person name="Davidson S."/>
            <person name="Churcher C."/>
            <person name="Quail M.A."/>
            <person name="Stevens M."/>
            <person name="Jones M.A."/>
            <person name="Watson M."/>
            <person name="Barron A."/>
            <person name="Layton A."/>
            <person name="Pickard D."/>
            <person name="Kingsley R.A."/>
            <person name="Bignell A."/>
            <person name="Clark L."/>
            <person name="Harris B."/>
            <person name="Ormond D."/>
            <person name="Abdellah Z."/>
            <person name="Brooks K."/>
            <person name="Cherevach I."/>
            <person name="Chillingworth T."/>
            <person name="Woodward J."/>
            <person name="Norberczak H."/>
            <person name="Lord A."/>
            <person name="Arrowsmith C."/>
            <person name="Jagels K."/>
            <person name="Moule S."/>
            <person name="Mungall K."/>
            <person name="Saunders M."/>
            <person name="Whitehead S."/>
            <person name="Chabalgoity J.A."/>
            <person name="Maskell D."/>
            <person name="Humphreys T."/>
            <person name="Roberts M."/>
            <person name="Barrow P.A."/>
            <person name="Dougan G."/>
            <person name="Parkhill J."/>
        </authorList>
    </citation>
    <scope>NUCLEOTIDE SEQUENCE [LARGE SCALE GENOMIC DNA]</scope>
    <source>
        <strain>287/91 / NCTC 13346</strain>
    </source>
</reference>
<protein>
    <recommendedName>
        <fullName evidence="1">Probable septum site-determining protein MinC</fullName>
    </recommendedName>
</protein>
<dbReference type="EMBL" id="AM933173">
    <property type="protein sequence ID" value="CAR37180.1"/>
    <property type="molecule type" value="Genomic_DNA"/>
</dbReference>
<dbReference type="RefSeq" id="WP_000072527.1">
    <property type="nucleotide sequence ID" value="NC_011274.1"/>
</dbReference>
<dbReference type="SMR" id="B5R8Y7"/>
<dbReference type="KEGG" id="seg:SG1303"/>
<dbReference type="HOGENOM" id="CLU_067812_0_1_6"/>
<dbReference type="Proteomes" id="UP000008321">
    <property type="component" value="Chromosome"/>
</dbReference>
<dbReference type="GO" id="GO:0000902">
    <property type="term" value="P:cell morphogenesis"/>
    <property type="evidence" value="ECO:0007669"/>
    <property type="project" value="InterPro"/>
</dbReference>
<dbReference type="GO" id="GO:0000917">
    <property type="term" value="P:division septum assembly"/>
    <property type="evidence" value="ECO:0007669"/>
    <property type="project" value="UniProtKB-KW"/>
</dbReference>
<dbReference type="GO" id="GO:0051302">
    <property type="term" value="P:regulation of cell division"/>
    <property type="evidence" value="ECO:0007669"/>
    <property type="project" value="InterPro"/>
</dbReference>
<dbReference type="GO" id="GO:1901891">
    <property type="term" value="P:regulation of cell septum assembly"/>
    <property type="evidence" value="ECO:0007669"/>
    <property type="project" value="InterPro"/>
</dbReference>
<dbReference type="FunFam" id="2.160.20.70:FF:000002">
    <property type="entry name" value="Probable septum site-determining protein MinC"/>
    <property type="match status" value="1"/>
</dbReference>
<dbReference type="Gene3D" id="2.160.20.70">
    <property type="match status" value="1"/>
</dbReference>
<dbReference type="Gene3D" id="3.30.70.260">
    <property type="match status" value="1"/>
</dbReference>
<dbReference type="HAMAP" id="MF_00267">
    <property type="entry name" value="MinC"/>
    <property type="match status" value="1"/>
</dbReference>
<dbReference type="InterPro" id="IPR016098">
    <property type="entry name" value="CAP/MinC_C"/>
</dbReference>
<dbReference type="InterPro" id="IPR013033">
    <property type="entry name" value="MinC"/>
</dbReference>
<dbReference type="InterPro" id="IPR036145">
    <property type="entry name" value="MinC_C_sf"/>
</dbReference>
<dbReference type="InterPro" id="IPR007874">
    <property type="entry name" value="MinC_N"/>
</dbReference>
<dbReference type="InterPro" id="IPR005526">
    <property type="entry name" value="Septum_form_inhib_MinC_C"/>
</dbReference>
<dbReference type="NCBIfam" id="TIGR01222">
    <property type="entry name" value="minC"/>
    <property type="match status" value="1"/>
</dbReference>
<dbReference type="PANTHER" id="PTHR34108">
    <property type="entry name" value="SEPTUM SITE-DETERMINING PROTEIN MINC"/>
    <property type="match status" value="1"/>
</dbReference>
<dbReference type="PANTHER" id="PTHR34108:SF1">
    <property type="entry name" value="SEPTUM SITE-DETERMINING PROTEIN MINC"/>
    <property type="match status" value="1"/>
</dbReference>
<dbReference type="Pfam" id="PF03775">
    <property type="entry name" value="MinC_C"/>
    <property type="match status" value="1"/>
</dbReference>
<dbReference type="Pfam" id="PF05209">
    <property type="entry name" value="MinC_N"/>
    <property type="match status" value="1"/>
</dbReference>
<dbReference type="SUPFAM" id="SSF63848">
    <property type="entry name" value="Cell-division inhibitor MinC, C-terminal domain"/>
    <property type="match status" value="1"/>
</dbReference>
<feature type="chain" id="PRO_1000114290" description="Probable septum site-determining protein MinC">
    <location>
        <begin position="1"/>
        <end position="235"/>
    </location>
</feature>
<feature type="region of interest" description="Disordered" evidence="2">
    <location>
        <begin position="104"/>
        <end position="125"/>
    </location>
</feature>
<feature type="compositionally biased region" description="Pro residues" evidence="2">
    <location>
        <begin position="110"/>
        <end position="119"/>
    </location>
</feature>
<comment type="function">
    <text evidence="1">Cell division inhibitor that blocks the formation of polar Z ring septums. Rapidly oscillates between the poles of the cell to destabilize FtsZ filaments that have formed before they mature into polar Z rings. Prevents FtsZ polymerization.</text>
</comment>
<comment type="subunit">
    <text evidence="1">Interacts with MinD and FtsZ.</text>
</comment>
<comment type="similarity">
    <text evidence="1">Belongs to the MinC family.</text>
</comment>
<gene>
    <name evidence="1" type="primary">minC</name>
    <name type="ordered locus">SG1303</name>
</gene>
<evidence type="ECO:0000255" key="1">
    <source>
        <dbReference type="HAMAP-Rule" id="MF_00267"/>
    </source>
</evidence>
<evidence type="ECO:0000256" key="2">
    <source>
        <dbReference type="SAM" id="MobiDB-lite"/>
    </source>
</evidence>